<sequence>MGVPSGLILCVLIGAFFISMAAAGDSGAYDWVMPARSGGGCKGSIGECIAEEEEFELDSESNRRILATKKYISYGALQKNSVPCSRRGASYYNCKPGAQANPYSRGCSAITRCRS</sequence>
<keyword id="KW-0903">Direct protein sequencing</keyword>
<keyword id="KW-1015">Disulfide bond</keyword>
<keyword id="KW-0372">Hormone</keyword>
<keyword id="KW-1185">Reference proteome</keyword>
<keyword id="KW-0964">Secreted</keyword>
<keyword id="KW-0732">Signal</keyword>
<proteinExistence type="evidence at protein level"/>
<evidence type="ECO:0000250" key="1"/>
<evidence type="ECO:0000255" key="2"/>
<evidence type="ECO:0000269" key="3">
    <source>
    </source>
</evidence>
<evidence type="ECO:0000305" key="4"/>
<reference key="1">
    <citation type="journal article" date="2001" name="Proc. Natl. Acad. Sci. U.S.A.">
        <title>RALF, a 5-kDa ubiquitous polypeptide in plants, arrests root growth and development.</title>
        <authorList>
            <person name="Pearce G."/>
            <person name="Moura D.S."/>
            <person name="Stratmann J."/>
            <person name="Ryan C.A. Jr."/>
        </authorList>
    </citation>
    <scope>NUCLEOTIDE SEQUENCE [MRNA]</scope>
    <scope>PROTEIN SEQUENCE OF 67-83</scope>
    <scope>FUNCTION</scope>
    <scope>MASS SPECTROMETRY</scope>
    <scope>DISULFIDE BONDS</scope>
</reference>
<feature type="signal peptide" evidence="2">
    <location>
        <begin position="1"/>
        <end position="23"/>
    </location>
</feature>
<feature type="propeptide" id="PRO_0000420289" description="Removed in mature form" evidence="3">
    <location>
        <begin position="24"/>
        <end position="66"/>
    </location>
</feature>
<feature type="peptide" id="PRO_5000061289" description="Rapid alkalinization factor">
    <location>
        <begin position="67"/>
        <end position="115"/>
    </location>
</feature>
<feature type="site" description="Required for proteolytic cleavage" evidence="1">
    <location>
        <begin position="63"/>
        <end position="64"/>
    </location>
</feature>
<feature type="disulfide bond" evidence="3">
    <location>
        <begin position="84"/>
        <end position="94"/>
    </location>
</feature>
<feature type="disulfide bond" evidence="3">
    <location>
        <begin position="107"/>
        <end position="113"/>
    </location>
</feature>
<organism>
    <name type="scientific">Nicotiana tabacum</name>
    <name type="common">Common tobacco</name>
    <dbReference type="NCBI Taxonomy" id="4097"/>
    <lineage>
        <taxon>Eukaryota</taxon>
        <taxon>Viridiplantae</taxon>
        <taxon>Streptophyta</taxon>
        <taxon>Embryophyta</taxon>
        <taxon>Tracheophyta</taxon>
        <taxon>Spermatophyta</taxon>
        <taxon>Magnoliopsida</taxon>
        <taxon>eudicotyledons</taxon>
        <taxon>Gunneridae</taxon>
        <taxon>Pentapetalae</taxon>
        <taxon>asterids</taxon>
        <taxon>lamiids</taxon>
        <taxon>Solanales</taxon>
        <taxon>Solanaceae</taxon>
        <taxon>Nicotianoideae</taxon>
        <taxon>Nicotianeae</taxon>
        <taxon>Nicotiana</taxon>
    </lineage>
</organism>
<dbReference type="EMBL" id="AF407278">
    <property type="protein sequence ID" value="AAL26478.1"/>
    <property type="molecule type" value="mRNA"/>
</dbReference>
<dbReference type="RefSeq" id="XP_016491711.1">
    <property type="nucleotide sequence ID" value="XM_016636225.1"/>
</dbReference>
<dbReference type="STRING" id="4097.Q945T0"/>
<dbReference type="PaxDb" id="4097-Q945T0"/>
<dbReference type="KEGG" id="nta:107811318"/>
<dbReference type="OMA" id="CSHKGAS"/>
<dbReference type="OrthoDB" id="1613518at2759"/>
<dbReference type="PhylomeDB" id="Q945T0"/>
<dbReference type="Proteomes" id="UP000084051">
    <property type="component" value="Unplaced"/>
</dbReference>
<dbReference type="GO" id="GO:0005576">
    <property type="term" value="C:extracellular region"/>
    <property type="evidence" value="ECO:0007669"/>
    <property type="project" value="UniProtKB-SubCell"/>
</dbReference>
<dbReference type="GO" id="GO:0005179">
    <property type="term" value="F:hormone activity"/>
    <property type="evidence" value="ECO:0000314"/>
    <property type="project" value="UniProtKB"/>
</dbReference>
<dbReference type="GO" id="GO:0048018">
    <property type="term" value="F:receptor ligand activity"/>
    <property type="evidence" value="ECO:0000314"/>
    <property type="project" value="UniProtKB"/>
</dbReference>
<dbReference type="GO" id="GO:0019722">
    <property type="term" value="P:calcium-mediated signaling"/>
    <property type="evidence" value="ECO:0000318"/>
    <property type="project" value="GO_Central"/>
</dbReference>
<dbReference type="GO" id="GO:0010469">
    <property type="term" value="P:regulation of signaling receptor activity"/>
    <property type="evidence" value="ECO:0000314"/>
    <property type="project" value="UniProtKB"/>
</dbReference>
<dbReference type="InterPro" id="IPR008801">
    <property type="entry name" value="RALF"/>
</dbReference>
<dbReference type="PANTHER" id="PTHR33136:SF107">
    <property type="entry name" value="RAPID ALKALINIZATION FACTOR"/>
    <property type="match status" value="1"/>
</dbReference>
<dbReference type="PANTHER" id="PTHR33136">
    <property type="entry name" value="RAPID ALKALINIZATION FACTOR-LIKE"/>
    <property type="match status" value="1"/>
</dbReference>
<dbReference type="Pfam" id="PF05498">
    <property type="entry name" value="RALF"/>
    <property type="match status" value="1"/>
</dbReference>
<accession>Q945T0</accession>
<protein>
    <recommendedName>
        <fullName>Rapid alkalinization factor</fullName>
        <shortName>NtRALF</shortName>
    </recommendedName>
</protein>
<comment type="function">
    <text evidence="3">Cell signaling peptide that may regulate plant stress, growth, and development. Mediates a rapid alkalinization of extracellular space by mediating a transient increase in the cytoplasmic Ca(2+) concentration leading to a calcium-dependent signaling events through a cell surface receptor and a concomitant activation of some intracellular mitogen-activated protein kinases. Prevents root growth and seedling development in heterologous system.</text>
</comment>
<comment type="subcellular location">
    <subcellularLocation>
        <location evidence="4">Secreted</location>
    </subcellularLocation>
</comment>
<comment type="PTM">
    <text evidence="1">Proteolytically cleaved, probably by S1P, a subtilisin-like serine protease (subtilase).</text>
</comment>
<comment type="mass spectrometry"/>
<comment type="similarity">
    <text evidence="4">Belongs to the plant rapid alkalinization factor (RALF) family.</text>
</comment>
<name>RALF_TOBAC</name>
<gene>
    <name type="primary">RALF</name>
</gene>